<evidence type="ECO:0000255" key="1">
    <source>
        <dbReference type="HAMAP-Rule" id="MF_01440"/>
    </source>
</evidence>
<evidence type="ECO:0000305" key="2"/>
<protein>
    <recommendedName>
        <fullName evidence="1">Probable chemoreceptor glutamine deamidase CheD</fullName>
        <ecNumber evidence="1">3.5.1.44</ecNumber>
    </recommendedName>
</protein>
<accession>Q92S04</accession>
<accession>Q52885</accession>
<proteinExistence type="inferred from homology"/>
<name>CHED_RHIME</name>
<reference key="1">
    <citation type="journal article" date="1995" name="Mol. Microbiol.">
        <title>Analysis of a chemotaxis operon in Rhizobium meliloti.</title>
        <authorList>
            <person name="Greck M."/>
            <person name="Platzer J."/>
            <person name="Sourjik V."/>
            <person name="Schmitt R."/>
        </authorList>
    </citation>
    <scope>NUCLEOTIDE SEQUENCE [GENOMIC DNA]</scope>
    <source>
        <strain>RU11/001</strain>
    </source>
</reference>
<reference key="2">
    <citation type="journal article" date="2001" name="Proc. Natl. Acad. Sci. U.S.A.">
        <title>Analysis of the chromosome sequence of the legume symbiont Sinorhizobium meliloti strain 1021.</title>
        <authorList>
            <person name="Capela D."/>
            <person name="Barloy-Hubler F."/>
            <person name="Gouzy J."/>
            <person name="Bothe G."/>
            <person name="Ampe F."/>
            <person name="Batut J."/>
            <person name="Boistard P."/>
            <person name="Becker A."/>
            <person name="Boutry M."/>
            <person name="Cadieu E."/>
            <person name="Dreano S."/>
            <person name="Gloux S."/>
            <person name="Godrie T."/>
            <person name="Goffeau A."/>
            <person name="Kahn D."/>
            <person name="Kiss E."/>
            <person name="Lelaure V."/>
            <person name="Masuy D."/>
            <person name="Pohl T."/>
            <person name="Portetelle D."/>
            <person name="Puehler A."/>
            <person name="Purnelle B."/>
            <person name="Ramsperger U."/>
            <person name="Renard C."/>
            <person name="Thebault P."/>
            <person name="Vandenbol M."/>
            <person name="Weidner S."/>
            <person name="Galibert F."/>
        </authorList>
    </citation>
    <scope>NUCLEOTIDE SEQUENCE [LARGE SCALE GENOMIC DNA]</scope>
    <source>
        <strain>1021</strain>
    </source>
</reference>
<reference key="3">
    <citation type="journal article" date="2001" name="Science">
        <title>The composite genome of the legume symbiont Sinorhizobium meliloti.</title>
        <authorList>
            <person name="Galibert F."/>
            <person name="Finan T.M."/>
            <person name="Long S.R."/>
            <person name="Puehler A."/>
            <person name="Abola P."/>
            <person name="Ampe F."/>
            <person name="Barloy-Hubler F."/>
            <person name="Barnett M.J."/>
            <person name="Becker A."/>
            <person name="Boistard P."/>
            <person name="Bothe G."/>
            <person name="Boutry M."/>
            <person name="Bowser L."/>
            <person name="Buhrmester J."/>
            <person name="Cadieu E."/>
            <person name="Capela D."/>
            <person name="Chain P."/>
            <person name="Cowie A."/>
            <person name="Davis R.W."/>
            <person name="Dreano S."/>
            <person name="Federspiel N.A."/>
            <person name="Fisher R.F."/>
            <person name="Gloux S."/>
            <person name="Godrie T."/>
            <person name="Goffeau A."/>
            <person name="Golding B."/>
            <person name="Gouzy J."/>
            <person name="Gurjal M."/>
            <person name="Hernandez-Lucas I."/>
            <person name="Hong A."/>
            <person name="Huizar L."/>
            <person name="Hyman R.W."/>
            <person name="Jones T."/>
            <person name="Kahn D."/>
            <person name="Kahn M.L."/>
            <person name="Kalman S."/>
            <person name="Keating D.H."/>
            <person name="Kiss E."/>
            <person name="Komp C."/>
            <person name="Lelaure V."/>
            <person name="Masuy D."/>
            <person name="Palm C."/>
            <person name="Peck M.C."/>
            <person name="Pohl T.M."/>
            <person name="Portetelle D."/>
            <person name="Purnelle B."/>
            <person name="Ramsperger U."/>
            <person name="Surzycki R."/>
            <person name="Thebault P."/>
            <person name="Vandenbol M."/>
            <person name="Vorhoelter F.J."/>
            <person name="Weidner S."/>
            <person name="Wells D.H."/>
            <person name="Wong K."/>
            <person name="Yeh K.-C."/>
            <person name="Batut J."/>
        </authorList>
    </citation>
    <scope>NUCLEOTIDE SEQUENCE [LARGE SCALE GENOMIC DNA]</scope>
    <source>
        <strain>1021</strain>
    </source>
</reference>
<keyword id="KW-0145">Chemotaxis</keyword>
<keyword id="KW-0378">Hydrolase</keyword>
<keyword id="KW-1185">Reference proteome</keyword>
<sequence>MNTEAAGRRVHVIQGEFKVVNDPDIVLSTILGSCVAACMRDPAAGVGGMNHFLLPGSATSPSSGADATRYGVHLMELLINGLLKQGARRDRLEAKIFGGARTIARFSNVGEQNAAFARQFLMDEGIRIVGESTGGDHGRKLEYWPSSGRARQYALTGVEAQRALQMDQRPAVPKPAESPIEFF</sequence>
<feature type="chain" id="PRO_0000251057" description="Probable chemoreceptor glutamine deamidase CheD">
    <location>
        <begin position="1"/>
        <end position="183"/>
    </location>
</feature>
<feature type="sequence conflict" description="In Ref. 1; AAA86679." evidence="2" ref="1">
    <original>P</original>
    <variation>S</variation>
    <location>
        <position position="179"/>
    </location>
</feature>
<gene>
    <name evidence="1" type="primary">cheD</name>
    <name type="synonym">orf9</name>
    <name type="ordered locus">R00644</name>
    <name type="ORF">SMc03012</name>
</gene>
<dbReference type="EC" id="3.5.1.44" evidence="1"/>
<dbReference type="EMBL" id="U13166">
    <property type="protein sequence ID" value="AAA86679.1"/>
    <property type="molecule type" value="Genomic_DNA"/>
</dbReference>
<dbReference type="EMBL" id="AL591688">
    <property type="protein sequence ID" value="CAC45216.1"/>
    <property type="molecule type" value="Genomic_DNA"/>
</dbReference>
<dbReference type="PIR" id="S61839">
    <property type="entry name" value="S61839"/>
</dbReference>
<dbReference type="RefSeq" id="NP_384750.1">
    <property type="nucleotide sequence ID" value="NC_003047.1"/>
</dbReference>
<dbReference type="RefSeq" id="WP_003529934.1">
    <property type="nucleotide sequence ID" value="NC_003047.1"/>
</dbReference>
<dbReference type="SMR" id="Q92S04"/>
<dbReference type="EnsemblBacteria" id="CAC45216">
    <property type="protein sequence ID" value="CAC45216"/>
    <property type="gene ID" value="SMc03012"/>
</dbReference>
<dbReference type="KEGG" id="sme:SMc03012"/>
<dbReference type="PATRIC" id="fig|266834.11.peg.2017"/>
<dbReference type="eggNOG" id="COG1871">
    <property type="taxonomic scope" value="Bacteria"/>
</dbReference>
<dbReference type="HOGENOM" id="CLU_087854_0_1_5"/>
<dbReference type="OrthoDB" id="9807202at2"/>
<dbReference type="Proteomes" id="UP000001976">
    <property type="component" value="Chromosome"/>
</dbReference>
<dbReference type="GO" id="GO:0050568">
    <property type="term" value="F:protein-glutamine glutaminase activity"/>
    <property type="evidence" value="ECO:0007669"/>
    <property type="project" value="UniProtKB-UniRule"/>
</dbReference>
<dbReference type="GO" id="GO:0006935">
    <property type="term" value="P:chemotaxis"/>
    <property type="evidence" value="ECO:0007669"/>
    <property type="project" value="UniProtKB-UniRule"/>
</dbReference>
<dbReference type="CDD" id="cd16352">
    <property type="entry name" value="CheD"/>
    <property type="match status" value="1"/>
</dbReference>
<dbReference type="FunFam" id="3.30.1330.200:FF:000001">
    <property type="entry name" value="Probable chemoreceptor glutamine deamidase CheD"/>
    <property type="match status" value="1"/>
</dbReference>
<dbReference type="Gene3D" id="3.30.1330.200">
    <property type="match status" value="1"/>
</dbReference>
<dbReference type="HAMAP" id="MF_01440">
    <property type="entry name" value="CheD"/>
    <property type="match status" value="1"/>
</dbReference>
<dbReference type="InterPro" id="IPR038592">
    <property type="entry name" value="CheD-like_sf"/>
</dbReference>
<dbReference type="InterPro" id="IPR005659">
    <property type="entry name" value="Chemorcpt_Glu_NH3ase_CheD"/>
</dbReference>
<dbReference type="InterPro" id="IPR011324">
    <property type="entry name" value="Cytotoxic_necrot_fac-like_cat"/>
</dbReference>
<dbReference type="NCBIfam" id="NF010019">
    <property type="entry name" value="PRK13497.1"/>
    <property type="match status" value="1"/>
</dbReference>
<dbReference type="PANTHER" id="PTHR35147">
    <property type="entry name" value="CHEMORECEPTOR GLUTAMINE DEAMIDASE CHED-RELATED"/>
    <property type="match status" value="1"/>
</dbReference>
<dbReference type="PANTHER" id="PTHR35147:SF2">
    <property type="entry name" value="CHEMORECEPTOR GLUTAMINE DEAMIDASE CHED-RELATED"/>
    <property type="match status" value="1"/>
</dbReference>
<dbReference type="Pfam" id="PF03975">
    <property type="entry name" value="CheD"/>
    <property type="match status" value="1"/>
</dbReference>
<dbReference type="SUPFAM" id="SSF64438">
    <property type="entry name" value="CNF1/YfiH-like putative cysteine hydrolases"/>
    <property type="match status" value="1"/>
</dbReference>
<comment type="function">
    <text evidence="1">Probably deamidates glutamine residues to glutamate on methyl-accepting chemotaxis receptors (MCPs), playing an important role in chemotaxis.</text>
</comment>
<comment type="catalytic activity">
    <reaction evidence="1">
        <text>L-glutaminyl-[protein] + H2O = L-glutamyl-[protein] + NH4(+)</text>
        <dbReference type="Rhea" id="RHEA:16441"/>
        <dbReference type="Rhea" id="RHEA-COMP:10207"/>
        <dbReference type="Rhea" id="RHEA-COMP:10208"/>
        <dbReference type="ChEBI" id="CHEBI:15377"/>
        <dbReference type="ChEBI" id="CHEBI:28938"/>
        <dbReference type="ChEBI" id="CHEBI:29973"/>
        <dbReference type="ChEBI" id="CHEBI:30011"/>
        <dbReference type="EC" id="3.5.1.44"/>
    </reaction>
</comment>
<comment type="similarity">
    <text evidence="1">Belongs to the CheD family.</text>
</comment>
<organism>
    <name type="scientific">Rhizobium meliloti (strain 1021)</name>
    <name type="common">Ensifer meliloti</name>
    <name type="synonym">Sinorhizobium meliloti</name>
    <dbReference type="NCBI Taxonomy" id="266834"/>
    <lineage>
        <taxon>Bacteria</taxon>
        <taxon>Pseudomonadati</taxon>
        <taxon>Pseudomonadota</taxon>
        <taxon>Alphaproteobacteria</taxon>
        <taxon>Hyphomicrobiales</taxon>
        <taxon>Rhizobiaceae</taxon>
        <taxon>Sinorhizobium/Ensifer group</taxon>
        <taxon>Sinorhizobium</taxon>
    </lineage>
</organism>